<proteinExistence type="inferred from homology"/>
<accession>B7M711</accession>
<dbReference type="EC" id="3.5.1.16" evidence="1"/>
<dbReference type="EMBL" id="CU928160">
    <property type="protein sequence ID" value="CAR00936.1"/>
    <property type="molecule type" value="Genomic_DNA"/>
</dbReference>
<dbReference type="RefSeq" id="WP_001295506.1">
    <property type="nucleotide sequence ID" value="NC_011741.1"/>
</dbReference>
<dbReference type="SMR" id="B7M711"/>
<dbReference type="MEROPS" id="M20.974"/>
<dbReference type="GeneID" id="75169401"/>
<dbReference type="KEGG" id="ecr:ECIAI1_4165"/>
<dbReference type="HOGENOM" id="CLU_021802_2_4_6"/>
<dbReference type="UniPathway" id="UPA00068">
    <property type="reaction ID" value="UER00110"/>
</dbReference>
<dbReference type="GO" id="GO:0005737">
    <property type="term" value="C:cytoplasm"/>
    <property type="evidence" value="ECO:0007669"/>
    <property type="project" value="UniProtKB-SubCell"/>
</dbReference>
<dbReference type="GO" id="GO:0008777">
    <property type="term" value="F:acetylornithine deacetylase activity"/>
    <property type="evidence" value="ECO:0007669"/>
    <property type="project" value="UniProtKB-UniRule"/>
</dbReference>
<dbReference type="GO" id="GO:0008270">
    <property type="term" value="F:zinc ion binding"/>
    <property type="evidence" value="ECO:0007669"/>
    <property type="project" value="UniProtKB-UniRule"/>
</dbReference>
<dbReference type="GO" id="GO:0006526">
    <property type="term" value="P:L-arginine biosynthetic process"/>
    <property type="evidence" value="ECO:0007669"/>
    <property type="project" value="UniProtKB-UniRule"/>
</dbReference>
<dbReference type="CDD" id="cd03894">
    <property type="entry name" value="M20_ArgE"/>
    <property type="match status" value="1"/>
</dbReference>
<dbReference type="FunFam" id="3.30.70.360:FF:000003">
    <property type="entry name" value="Acetylornithine deacetylase"/>
    <property type="match status" value="1"/>
</dbReference>
<dbReference type="Gene3D" id="3.30.70.360">
    <property type="match status" value="1"/>
</dbReference>
<dbReference type="Gene3D" id="3.40.630.10">
    <property type="entry name" value="Zn peptidases"/>
    <property type="match status" value="1"/>
</dbReference>
<dbReference type="HAMAP" id="MF_01108">
    <property type="entry name" value="ArgE"/>
    <property type="match status" value="1"/>
</dbReference>
<dbReference type="InterPro" id="IPR010169">
    <property type="entry name" value="AcOrn-deacetyl"/>
</dbReference>
<dbReference type="InterPro" id="IPR001261">
    <property type="entry name" value="ArgE/DapE_CS"/>
</dbReference>
<dbReference type="InterPro" id="IPR036264">
    <property type="entry name" value="Bact_exopeptidase_dim_dom"/>
</dbReference>
<dbReference type="InterPro" id="IPR002933">
    <property type="entry name" value="Peptidase_M20"/>
</dbReference>
<dbReference type="InterPro" id="IPR011650">
    <property type="entry name" value="Peptidase_M20_dimer"/>
</dbReference>
<dbReference type="InterPro" id="IPR050072">
    <property type="entry name" value="Peptidase_M20A"/>
</dbReference>
<dbReference type="NCBIfam" id="TIGR01892">
    <property type="entry name" value="AcOrn-deacetyl"/>
    <property type="match status" value="1"/>
</dbReference>
<dbReference type="NCBIfam" id="NF003474">
    <property type="entry name" value="PRK05111.1"/>
    <property type="match status" value="1"/>
</dbReference>
<dbReference type="PANTHER" id="PTHR43808">
    <property type="entry name" value="ACETYLORNITHINE DEACETYLASE"/>
    <property type="match status" value="1"/>
</dbReference>
<dbReference type="PANTHER" id="PTHR43808:SF1">
    <property type="entry name" value="ACETYLORNITHINE DEACETYLASE"/>
    <property type="match status" value="1"/>
</dbReference>
<dbReference type="Pfam" id="PF07687">
    <property type="entry name" value="M20_dimer"/>
    <property type="match status" value="1"/>
</dbReference>
<dbReference type="Pfam" id="PF01546">
    <property type="entry name" value="Peptidase_M20"/>
    <property type="match status" value="1"/>
</dbReference>
<dbReference type="SUPFAM" id="SSF55031">
    <property type="entry name" value="Bacterial exopeptidase dimerisation domain"/>
    <property type="match status" value="1"/>
</dbReference>
<dbReference type="SUPFAM" id="SSF53187">
    <property type="entry name" value="Zn-dependent exopeptidases"/>
    <property type="match status" value="1"/>
</dbReference>
<dbReference type="PROSITE" id="PS00758">
    <property type="entry name" value="ARGE_DAPE_CPG2_1"/>
    <property type="match status" value="1"/>
</dbReference>
<dbReference type="PROSITE" id="PS00759">
    <property type="entry name" value="ARGE_DAPE_CPG2_2"/>
    <property type="match status" value="1"/>
</dbReference>
<keyword id="KW-0028">Amino-acid biosynthesis</keyword>
<keyword id="KW-0055">Arginine biosynthesis</keyword>
<keyword id="KW-0170">Cobalt</keyword>
<keyword id="KW-0963">Cytoplasm</keyword>
<keyword id="KW-0378">Hydrolase</keyword>
<keyword id="KW-0479">Metal-binding</keyword>
<keyword id="KW-0862">Zinc</keyword>
<evidence type="ECO:0000255" key="1">
    <source>
        <dbReference type="HAMAP-Rule" id="MF_01108"/>
    </source>
</evidence>
<sequence length="383" mass="42337">MKNKLPPFIEIYRALIATPSISATEEALDQSNADLITLLADWFKDLGFNVEVQPVPGTRNKFNMLASCGQGAGGLLLAGHTDTVPFDDGRWTRDPFTLTEHDGKLYGLGTADMKGFFAFILDALRDVDVTKLKKPLYILATADEETSMAGARYFAETTALRPDCAIIGEPTSLQPVRAHKGHISNAIRIQGQSGHSSDPARGVNAIELMHDAIGHILQLRDNLKERYHYEAFTVPYPTLNLGHIHGGDASNRICACCELHMDIRPLPGMTLNELNGLLNDALAPVSERWPGRLTVDELHPPIPGYECPPNHQLVEVVEKLLGAKTEVVNYCTEAPFIQTLCPTLVLGPGSINQAHQPDEYLETRFIKPTRELITQVIHHFCWH</sequence>
<feature type="chain" id="PRO_1000137064" description="Acetylornithine deacetylase">
    <location>
        <begin position="1"/>
        <end position="383"/>
    </location>
</feature>
<feature type="active site" evidence="1">
    <location>
        <position position="82"/>
    </location>
</feature>
<feature type="active site" evidence="1">
    <location>
        <position position="144"/>
    </location>
</feature>
<feature type="binding site" evidence="1">
    <location>
        <position position="80"/>
    </location>
    <ligand>
        <name>Zn(2+)</name>
        <dbReference type="ChEBI" id="CHEBI:29105"/>
        <label>1</label>
    </ligand>
</feature>
<feature type="binding site" evidence="1">
    <location>
        <position position="112"/>
    </location>
    <ligand>
        <name>Zn(2+)</name>
        <dbReference type="ChEBI" id="CHEBI:29105"/>
        <label>1</label>
    </ligand>
</feature>
<feature type="binding site" evidence="1">
    <location>
        <position position="112"/>
    </location>
    <ligand>
        <name>Zn(2+)</name>
        <dbReference type="ChEBI" id="CHEBI:29105"/>
        <label>2</label>
    </ligand>
</feature>
<feature type="binding site" evidence="1">
    <location>
        <position position="145"/>
    </location>
    <ligand>
        <name>Zn(2+)</name>
        <dbReference type="ChEBI" id="CHEBI:29105"/>
        <label>2</label>
    </ligand>
</feature>
<feature type="binding site" evidence="1">
    <location>
        <position position="169"/>
    </location>
    <ligand>
        <name>Zn(2+)</name>
        <dbReference type="ChEBI" id="CHEBI:29105"/>
        <label>1</label>
    </ligand>
</feature>
<feature type="binding site" evidence="1">
    <location>
        <position position="355"/>
    </location>
    <ligand>
        <name>Zn(2+)</name>
        <dbReference type="ChEBI" id="CHEBI:29105"/>
        <label>2</label>
    </ligand>
</feature>
<gene>
    <name evidence="1" type="primary">argE</name>
    <name type="ordered locus">ECIAI1_4165</name>
</gene>
<name>ARGE_ECO8A</name>
<reference key="1">
    <citation type="journal article" date="2009" name="PLoS Genet.">
        <title>Organised genome dynamics in the Escherichia coli species results in highly diverse adaptive paths.</title>
        <authorList>
            <person name="Touchon M."/>
            <person name="Hoede C."/>
            <person name="Tenaillon O."/>
            <person name="Barbe V."/>
            <person name="Baeriswyl S."/>
            <person name="Bidet P."/>
            <person name="Bingen E."/>
            <person name="Bonacorsi S."/>
            <person name="Bouchier C."/>
            <person name="Bouvet O."/>
            <person name="Calteau A."/>
            <person name="Chiapello H."/>
            <person name="Clermont O."/>
            <person name="Cruveiller S."/>
            <person name="Danchin A."/>
            <person name="Diard M."/>
            <person name="Dossat C."/>
            <person name="Karoui M.E."/>
            <person name="Frapy E."/>
            <person name="Garry L."/>
            <person name="Ghigo J.M."/>
            <person name="Gilles A.M."/>
            <person name="Johnson J."/>
            <person name="Le Bouguenec C."/>
            <person name="Lescat M."/>
            <person name="Mangenot S."/>
            <person name="Martinez-Jehanne V."/>
            <person name="Matic I."/>
            <person name="Nassif X."/>
            <person name="Oztas S."/>
            <person name="Petit M.A."/>
            <person name="Pichon C."/>
            <person name="Rouy Z."/>
            <person name="Ruf C.S."/>
            <person name="Schneider D."/>
            <person name="Tourret J."/>
            <person name="Vacherie B."/>
            <person name="Vallenet D."/>
            <person name="Medigue C."/>
            <person name="Rocha E.P.C."/>
            <person name="Denamur E."/>
        </authorList>
    </citation>
    <scope>NUCLEOTIDE SEQUENCE [LARGE SCALE GENOMIC DNA]</scope>
    <source>
        <strain>IAI1</strain>
    </source>
</reference>
<comment type="function">
    <text evidence="1">Catalyzes the hydrolysis of the amide bond of N(2)-acetylated L-amino acids. Cleaves the acetyl group from N-acetyl-L-ornithine to form L-ornithine, an intermediate in L-arginine biosynthesis pathway, and a branchpoint in the synthesis of polyamines.</text>
</comment>
<comment type="catalytic activity">
    <reaction evidence="1">
        <text>N(2)-acetyl-L-ornithine + H2O = L-ornithine + acetate</text>
        <dbReference type="Rhea" id="RHEA:15941"/>
        <dbReference type="ChEBI" id="CHEBI:15377"/>
        <dbReference type="ChEBI" id="CHEBI:30089"/>
        <dbReference type="ChEBI" id="CHEBI:46911"/>
        <dbReference type="ChEBI" id="CHEBI:57805"/>
        <dbReference type="EC" id="3.5.1.16"/>
    </reaction>
</comment>
<comment type="cofactor">
    <cofactor evidence="1">
        <name>Zn(2+)</name>
        <dbReference type="ChEBI" id="CHEBI:29105"/>
    </cofactor>
    <cofactor evidence="1">
        <name>Co(2+)</name>
        <dbReference type="ChEBI" id="CHEBI:48828"/>
    </cofactor>
    <text evidence="1">Binds 2 Zn(2+) or Co(2+) ions per subunit.</text>
</comment>
<comment type="cofactor">
    <cofactor evidence="1">
        <name>glutathione</name>
        <dbReference type="ChEBI" id="CHEBI:57925"/>
    </cofactor>
</comment>
<comment type="pathway">
    <text evidence="1">Amino-acid biosynthesis; L-arginine biosynthesis; L-ornithine from N(2)-acetyl-L-ornithine (linear): step 1/1.</text>
</comment>
<comment type="subunit">
    <text evidence="1">Homodimer.</text>
</comment>
<comment type="subcellular location">
    <subcellularLocation>
        <location evidence="1">Cytoplasm</location>
    </subcellularLocation>
</comment>
<comment type="similarity">
    <text evidence="1">Belongs to the peptidase M20A family. ArgE subfamily.</text>
</comment>
<protein>
    <recommendedName>
        <fullName evidence="1">Acetylornithine deacetylase</fullName>
        <shortName evidence="1">AO</shortName>
        <shortName evidence="1">Acetylornithinase</shortName>
        <ecNumber evidence="1">3.5.1.16</ecNumber>
    </recommendedName>
    <alternativeName>
        <fullName evidence="1">N-acetylornithinase</fullName>
        <shortName evidence="1">NAO</shortName>
    </alternativeName>
</protein>
<organism>
    <name type="scientific">Escherichia coli O8 (strain IAI1)</name>
    <dbReference type="NCBI Taxonomy" id="585034"/>
    <lineage>
        <taxon>Bacteria</taxon>
        <taxon>Pseudomonadati</taxon>
        <taxon>Pseudomonadota</taxon>
        <taxon>Gammaproteobacteria</taxon>
        <taxon>Enterobacterales</taxon>
        <taxon>Enterobacteriaceae</taxon>
        <taxon>Escherichia</taxon>
    </lineage>
</organism>